<accession>Q91ZX1</accession>
<accession>Q3TAT9</accession>
<accession>Q91ZW5</accession>
<protein>
    <recommendedName>
        <fullName>CD209 antigen-like protein A</fullName>
    </recommendedName>
    <alternativeName>
        <fullName>Dendritic cell-specific ICAM-3-grabbing non-integrin</fullName>
        <shortName>DC-SIGN</shortName>
    </alternativeName>
    <cdAntigenName>CD209</cdAntigenName>
</protein>
<sequence>MSDSKEMGKRQLRPLDEELLTSSHTRHSIKGFGFQTNSGFSSFTGCLVHSQVPLALQVLFLAVCSVLLVVILVKVYKIPSSQEENNQMNVYQELTQLKAGVDRLCRSCPWDWTHFQGSCYFFSVAQKSWNDSATACHNVGAQLVVIKSDEEQNFLQQTSKKRGYTWMGLIDMSKESTWYWVDGSPLTLSFMKYWSKGEPNNLGEEDCAEFRDDGWNDTKCTNKKFWICKKLSTSCPSK</sequence>
<dbReference type="EMBL" id="AF373408">
    <property type="protein sequence ID" value="AAL13234.1"/>
    <property type="molecule type" value="mRNA"/>
</dbReference>
<dbReference type="EMBL" id="AF374470">
    <property type="protein sequence ID" value="AAL27539.1"/>
    <property type="molecule type" value="mRNA"/>
</dbReference>
<dbReference type="EMBL" id="AY049062">
    <property type="protein sequence ID" value="AAK85825.1"/>
    <property type="molecule type" value="mRNA"/>
</dbReference>
<dbReference type="EMBL" id="AK054139">
    <property type="protein sequence ID" value="BAC35667.1"/>
    <property type="molecule type" value="mRNA"/>
</dbReference>
<dbReference type="EMBL" id="AK171639">
    <property type="protein sequence ID" value="BAE42579.1"/>
    <property type="molecule type" value="mRNA"/>
</dbReference>
<dbReference type="CCDS" id="CCDS22073.1">
    <molecule id="Q91ZX1-1"/>
</dbReference>
<dbReference type="RefSeq" id="NP_573501.1">
    <molecule id="Q91ZX1-1"/>
    <property type="nucleotide sequence ID" value="NM_133238.5"/>
</dbReference>
<dbReference type="SMR" id="Q91ZX1"/>
<dbReference type="FunCoup" id="Q91ZX1">
    <property type="interactions" value="286"/>
</dbReference>
<dbReference type="STRING" id="10090.ENSMUSP00000012847"/>
<dbReference type="GlyCosmos" id="Q91ZX1">
    <property type="glycosylation" value="2 sites, No reported glycans"/>
</dbReference>
<dbReference type="GlyGen" id="Q91ZX1">
    <property type="glycosylation" value="3 sites"/>
</dbReference>
<dbReference type="iPTMnet" id="Q91ZX1"/>
<dbReference type="PhosphoSitePlus" id="Q91ZX1"/>
<dbReference type="PaxDb" id="10090-ENSMUSP00000012847"/>
<dbReference type="DNASU" id="170786"/>
<dbReference type="Ensembl" id="ENSMUST00000012847.3">
    <molecule id="Q91ZX1-1"/>
    <property type="protein sequence ID" value="ENSMUSP00000012847.2"/>
    <property type="gene ID" value="ENSMUSG00000031494.8"/>
</dbReference>
<dbReference type="Ensembl" id="ENSMUST00000207979.2">
    <molecule id="Q91ZX1-2"/>
    <property type="protein sequence ID" value="ENSMUSP00000146702.2"/>
    <property type="gene ID" value="ENSMUSG00000031494.8"/>
</dbReference>
<dbReference type="GeneID" id="170786"/>
<dbReference type="KEGG" id="mmu:170786"/>
<dbReference type="UCSC" id="uc009ksq.2">
    <molecule id="Q91ZX1-1"/>
    <property type="organism name" value="mouse"/>
</dbReference>
<dbReference type="UCSC" id="uc012fyt.1">
    <molecule id="Q91ZX1-2"/>
    <property type="organism name" value="mouse"/>
</dbReference>
<dbReference type="AGR" id="MGI:2157942"/>
<dbReference type="CTD" id="170786"/>
<dbReference type="MGI" id="MGI:2157942">
    <property type="gene designation" value="Cd209a"/>
</dbReference>
<dbReference type="VEuPathDB" id="HostDB:ENSMUSG00000031494"/>
<dbReference type="eggNOG" id="KOG4297">
    <property type="taxonomic scope" value="Eukaryota"/>
</dbReference>
<dbReference type="GeneTree" id="ENSGT00940000155012"/>
<dbReference type="HOGENOM" id="CLU_049894_7_3_1"/>
<dbReference type="InParanoid" id="Q91ZX1"/>
<dbReference type="OMA" id="IRFANTK"/>
<dbReference type="OrthoDB" id="2142683at2759"/>
<dbReference type="PhylomeDB" id="Q91ZX1"/>
<dbReference type="TreeFam" id="TF333341"/>
<dbReference type="Reactome" id="R-MMU-5621575">
    <property type="pathway name" value="CD209 (DC-SIGN) signaling"/>
</dbReference>
<dbReference type="Reactome" id="R-MMU-8851680">
    <property type="pathway name" value="Butyrophilin (BTN) family interactions"/>
</dbReference>
<dbReference type="BioGRID-ORCS" id="170786">
    <property type="hits" value="4 hits in 76 CRISPR screens"/>
</dbReference>
<dbReference type="PRO" id="PR:Q91ZX1"/>
<dbReference type="Proteomes" id="UP000000589">
    <property type="component" value="Chromosome 8"/>
</dbReference>
<dbReference type="RNAct" id="Q91ZX1">
    <property type="molecule type" value="protein"/>
</dbReference>
<dbReference type="Bgee" id="ENSMUSG00000031494">
    <property type="expression patterns" value="Expressed in granulocyte and 46 other cell types or tissues"/>
</dbReference>
<dbReference type="ExpressionAtlas" id="Q91ZX1">
    <property type="expression patterns" value="baseline and differential"/>
</dbReference>
<dbReference type="GO" id="GO:0009986">
    <property type="term" value="C:cell surface"/>
    <property type="evidence" value="ECO:0000314"/>
    <property type="project" value="MGI"/>
</dbReference>
<dbReference type="GO" id="GO:0016020">
    <property type="term" value="C:membrane"/>
    <property type="evidence" value="ECO:0000250"/>
    <property type="project" value="MGI"/>
</dbReference>
<dbReference type="GO" id="GO:0030246">
    <property type="term" value="F:carbohydrate binding"/>
    <property type="evidence" value="ECO:0000250"/>
    <property type="project" value="MGI"/>
</dbReference>
<dbReference type="GO" id="GO:0097367">
    <property type="term" value="F:carbohydrate derivative binding"/>
    <property type="evidence" value="ECO:0000314"/>
    <property type="project" value="MGI"/>
</dbReference>
<dbReference type="GO" id="GO:0005537">
    <property type="term" value="F:D-mannose binding"/>
    <property type="evidence" value="ECO:0000314"/>
    <property type="project" value="MGI"/>
</dbReference>
<dbReference type="GO" id="GO:0046872">
    <property type="term" value="F:metal ion binding"/>
    <property type="evidence" value="ECO:0007669"/>
    <property type="project" value="UniProtKB-KW"/>
</dbReference>
<dbReference type="GO" id="GO:0006897">
    <property type="term" value="P:endocytosis"/>
    <property type="evidence" value="ECO:0007669"/>
    <property type="project" value="UniProtKB-KW"/>
</dbReference>
<dbReference type="GO" id="GO:0042129">
    <property type="term" value="P:regulation of T cell proliferation"/>
    <property type="evidence" value="ECO:0000266"/>
    <property type="project" value="MGI"/>
</dbReference>
<dbReference type="CDD" id="cd03590">
    <property type="entry name" value="CLECT_DC-SIGN_like"/>
    <property type="match status" value="1"/>
</dbReference>
<dbReference type="FunFam" id="3.10.100.10:FF:000044">
    <property type="entry name" value="CD209 antigen, isoform CRA_b"/>
    <property type="match status" value="1"/>
</dbReference>
<dbReference type="Gene3D" id="3.10.100.10">
    <property type="entry name" value="Mannose-Binding Protein A, subunit A"/>
    <property type="match status" value="1"/>
</dbReference>
<dbReference type="InterPro" id="IPR001304">
    <property type="entry name" value="C-type_lectin-like"/>
</dbReference>
<dbReference type="InterPro" id="IPR016186">
    <property type="entry name" value="C-type_lectin-like/link_sf"/>
</dbReference>
<dbReference type="InterPro" id="IPR018378">
    <property type="entry name" value="C-type_lectin_CS"/>
</dbReference>
<dbReference type="InterPro" id="IPR051379">
    <property type="entry name" value="C-type_Lectin_Receptor_IMM"/>
</dbReference>
<dbReference type="InterPro" id="IPR033989">
    <property type="entry name" value="CD209-like_CTLD"/>
</dbReference>
<dbReference type="InterPro" id="IPR016187">
    <property type="entry name" value="CTDL_fold"/>
</dbReference>
<dbReference type="PANTHER" id="PTHR46746:SF9">
    <property type="entry name" value="CD209 ANTIGEN-LIKE PROTEIN C-LIKE"/>
    <property type="match status" value="1"/>
</dbReference>
<dbReference type="PANTHER" id="PTHR46746">
    <property type="entry name" value="KILLER CELL LECTIN-LIKE RECEPTOR SUBFAMILY F MEMBER 2"/>
    <property type="match status" value="1"/>
</dbReference>
<dbReference type="Pfam" id="PF00059">
    <property type="entry name" value="Lectin_C"/>
    <property type="match status" value="1"/>
</dbReference>
<dbReference type="SMART" id="SM00034">
    <property type="entry name" value="CLECT"/>
    <property type="match status" value="1"/>
</dbReference>
<dbReference type="SUPFAM" id="SSF56436">
    <property type="entry name" value="C-type lectin-like"/>
    <property type="match status" value="1"/>
</dbReference>
<dbReference type="PROSITE" id="PS00615">
    <property type="entry name" value="C_TYPE_LECTIN_1"/>
    <property type="match status" value="1"/>
</dbReference>
<dbReference type="PROSITE" id="PS50041">
    <property type="entry name" value="C_TYPE_LECTIN_2"/>
    <property type="match status" value="1"/>
</dbReference>
<feature type="chain" id="PRO_0000046604" description="CD209 antigen-like protein A">
    <location>
        <begin position="1"/>
        <end position="238"/>
    </location>
</feature>
<feature type="topological domain" description="Cytoplasmic" evidence="2">
    <location>
        <begin position="1"/>
        <end position="51"/>
    </location>
</feature>
<feature type="transmembrane region" description="Helical; Signal-anchor for type II membrane protein" evidence="2">
    <location>
        <begin position="52"/>
        <end position="72"/>
    </location>
</feature>
<feature type="topological domain" description="Extracellular" evidence="2">
    <location>
        <begin position="73"/>
        <end position="238"/>
    </location>
</feature>
<feature type="domain" description="C-type lectin" evidence="3">
    <location>
        <begin position="115"/>
        <end position="229"/>
    </location>
</feature>
<feature type="binding site" evidence="1">
    <location>
        <position position="198"/>
    </location>
    <ligand>
        <name>Ca(2+)</name>
        <dbReference type="ChEBI" id="CHEBI:29108"/>
    </ligand>
</feature>
<feature type="binding site" evidence="1">
    <location>
        <position position="200"/>
    </location>
    <ligand>
        <name>Ca(2+)</name>
        <dbReference type="ChEBI" id="CHEBI:29108"/>
    </ligand>
</feature>
<feature type="binding site" evidence="1">
    <location>
        <position position="202"/>
    </location>
    <ligand>
        <name>Ca(2+)</name>
        <dbReference type="ChEBI" id="CHEBI:29108"/>
    </ligand>
</feature>
<feature type="binding site" evidence="1">
    <location>
        <position position="205"/>
    </location>
    <ligand>
        <name>Ca(2+)</name>
        <dbReference type="ChEBI" id="CHEBI:29108"/>
    </ligand>
</feature>
<feature type="binding site" evidence="1">
    <location>
        <position position="216"/>
    </location>
    <ligand>
        <name>Ca(2+)</name>
        <dbReference type="ChEBI" id="CHEBI:29108"/>
    </ligand>
</feature>
<feature type="binding site" evidence="1">
    <location>
        <position position="217"/>
    </location>
    <ligand>
        <name>Ca(2+)</name>
        <dbReference type="ChEBI" id="CHEBI:29108"/>
    </ligand>
</feature>
<feature type="glycosylation site" description="N-linked (GlcNAc...) asparagine" evidence="2">
    <location>
        <position position="130"/>
    </location>
</feature>
<feature type="glycosylation site" description="N-linked (GlcNAc...) asparagine" evidence="2">
    <location>
        <position position="216"/>
    </location>
</feature>
<feature type="disulfide bond" evidence="3">
    <location>
        <begin position="108"/>
        <end position="119"/>
    </location>
</feature>
<feature type="disulfide bond" evidence="3">
    <location>
        <begin position="136"/>
        <end position="228"/>
    </location>
</feature>
<feature type="disulfide bond" evidence="3">
    <location>
        <begin position="207"/>
        <end position="220"/>
    </location>
</feature>
<feature type="splice variant" id="VSP_010067" description="In isoform 2." evidence="6">
    <location>
        <begin position="75"/>
        <end position="101"/>
    </location>
</feature>
<evidence type="ECO:0000250" key="1"/>
<evidence type="ECO:0000255" key="2"/>
<evidence type="ECO:0000255" key="3">
    <source>
        <dbReference type="PROSITE-ProRule" id="PRU00040"/>
    </source>
</evidence>
<evidence type="ECO:0000269" key="4">
    <source>
    </source>
</evidence>
<evidence type="ECO:0000269" key="5">
    <source>
    </source>
</evidence>
<evidence type="ECO:0000303" key="6">
    <source>
    </source>
</evidence>
<evidence type="ECO:0000305" key="7"/>
<organism>
    <name type="scientific">Mus musculus</name>
    <name type="common">Mouse</name>
    <dbReference type="NCBI Taxonomy" id="10090"/>
    <lineage>
        <taxon>Eukaryota</taxon>
        <taxon>Metazoa</taxon>
        <taxon>Chordata</taxon>
        <taxon>Craniata</taxon>
        <taxon>Vertebrata</taxon>
        <taxon>Euteleostomi</taxon>
        <taxon>Mammalia</taxon>
        <taxon>Eutheria</taxon>
        <taxon>Euarchontoglires</taxon>
        <taxon>Glires</taxon>
        <taxon>Rodentia</taxon>
        <taxon>Myomorpha</taxon>
        <taxon>Muroidea</taxon>
        <taxon>Muridae</taxon>
        <taxon>Murinae</taxon>
        <taxon>Mus</taxon>
        <taxon>Mus</taxon>
    </lineage>
</organism>
<proteinExistence type="evidence at transcript level"/>
<reference key="1">
    <citation type="journal article" date="2001" name="Int. Immunol.">
        <title>Five mouse homologues of the human dendritic cell C-type lectin, DC-SIGN.</title>
        <authorList>
            <person name="Park C.G."/>
            <person name="Takahara K."/>
            <person name="Umemoto E."/>
            <person name="Yashima Y."/>
            <person name="Matsubara K."/>
            <person name="Matsuda Y."/>
            <person name="Clausen B.E."/>
            <person name="Inaba K."/>
            <person name="Steinman R.M."/>
        </authorList>
    </citation>
    <scope>NUCLEOTIDE SEQUENCE [MRNA] (ISOFORMS 1 AND 2)</scope>
    <scope>TISSUE SPECIFICITY</scope>
    <source>
        <strain>C57BL/6J</strain>
    </source>
</reference>
<reference key="2">
    <citation type="journal article" date="2001" name="Mol. Immunol.">
        <title>Molecular cloning of a C-type lectin superfamily protein differentially expressed by CD8alpha(-) splenic dendritic cells.</title>
        <authorList>
            <person name="Caminschi I."/>
            <person name="Lucas K.M."/>
            <person name="O'Keeffe M.A."/>
            <person name="Hochrein H."/>
            <person name="Laabi Y."/>
            <person name="Brodnicki T.C."/>
            <person name="Lew A.M."/>
            <person name="Shortman K."/>
            <person name="Wright M.D."/>
        </authorList>
    </citation>
    <scope>NUCLEOTIDE SEQUENCE [MRNA] (ISOFORM 1)</scope>
    <scope>SUBCELLULAR LOCATION</scope>
    <scope>INDUCTION</scope>
    <scope>TISSUE SPECIFICITY</scope>
</reference>
<reference key="3">
    <citation type="journal article" date="2005" name="Science">
        <title>The transcriptional landscape of the mammalian genome.</title>
        <authorList>
            <person name="Carninci P."/>
            <person name="Kasukawa T."/>
            <person name="Katayama S."/>
            <person name="Gough J."/>
            <person name="Frith M.C."/>
            <person name="Maeda N."/>
            <person name="Oyama R."/>
            <person name="Ravasi T."/>
            <person name="Lenhard B."/>
            <person name="Wells C."/>
            <person name="Kodzius R."/>
            <person name="Shimokawa K."/>
            <person name="Bajic V.B."/>
            <person name="Brenner S.E."/>
            <person name="Batalov S."/>
            <person name="Forrest A.R."/>
            <person name="Zavolan M."/>
            <person name="Davis M.J."/>
            <person name="Wilming L.G."/>
            <person name="Aidinis V."/>
            <person name="Allen J.E."/>
            <person name="Ambesi-Impiombato A."/>
            <person name="Apweiler R."/>
            <person name="Aturaliya R.N."/>
            <person name="Bailey T.L."/>
            <person name="Bansal M."/>
            <person name="Baxter L."/>
            <person name="Beisel K.W."/>
            <person name="Bersano T."/>
            <person name="Bono H."/>
            <person name="Chalk A.M."/>
            <person name="Chiu K.P."/>
            <person name="Choudhary V."/>
            <person name="Christoffels A."/>
            <person name="Clutterbuck D.R."/>
            <person name="Crowe M.L."/>
            <person name="Dalla E."/>
            <person name="Dalrymple B.P."/>
            <person name="de Bono B."/>
            <person name="Della Gatta G."/>
            <person name="di Bernardo D."/>
            <person name="Down T."/>
            <person name="Engstrom P."/>
            <person name="Fagiolini M."/>
            <person name="Faulkner G."/>
            <person name="Fletcher C.F."/>
            <person name="Fukushima T."/>
            <person name="Furuno M."/>
            <person name="Futaki S."/>
            <person name="Gariboldi M."/>
            <person name="Georgii-Hemming P."/>
            <person name="Gingeras T.R."/>
            <person name="Gojobori T."/>
            <person name="Green R.E."/>
            <person name="Gustincich S."/>
            <person name="Harbers M."/>
            <person name="Hayashi Y."/>
            <person name="Hensch T.K."/>
            <person name="Hirokawa N."/>
            <person name="Hill D."/>
            <person name="Huminiecki L."/>
            <person name="Iacono M."/>
            <person name="Ikeo K."/>
            <person name="Iwama A."/>
            <person name="Ishikawa T."/>
            <person name="Jakt M."/>
            <person name="Kanapin A."/>
            <person name="Katoh M."/>
            <person name="Kawasawa Y."/>
            <person name="Kelso J."/>
            <person name="Kitamura H."/>
            <person name="Kitano H."/>
            <person name="Kollias G."/>
            <person name="Krishnan S.P."/>
            <person name="Kruger A."/>
            <person name="Kummerfeld S.K."/>
            <person name="Kurochkin I.V."/>
            <person name="Lareau L.F."/>
            <person name="Lazarevic D."/>
            <person name="Lipovich L."/>
            <person name="Liu J."/>
            <person name="Liuni S."/>
            <person name="McWilliam S."/>
            <person name="Madan Babu M."/>
            <person name="Madera M."/>
            <person name="Marchionni L."/>
            <person name="Matsuda H."/>
            <person name="Matsuzawa S."/>
            <person name="Miki H."/>
            <person name="Mignone F."/>
            <person name="Miyake S."/>
            <person name="Morris K."/>
            <person name="Mottagui-Tabar S."/>
            <person name="Mulder N."/>
            <person name="Nakano N."/>
            <person name="Nakauchi H."/>
            <person name="Ng P."/>
            <person name="Nilsson R."/>
            <person name="Nishiguchi S."/>
            <person name="Nishikawa S."/>
            <person name="Nori F."/>
            <person name="Ohara O."/>
            <person name="Okazaki Y."/>
            <person name="Orlando V."/>
            <person name="Pang K.C."/>
            <person name="Pavan W.J."/>
            <person name="Pavesi G."/>
            <person name="Pesole G."/>
            <person name="Petrovsky N."/>
            <person name="Piazza S."/>
            <person name="Reed J."/>
            <person name="Reid J.F."/>
            <person name="Ring B.Z."/>
            <person name="Ringwald M."/>
            <person name="Rost B."/>
            <person name="Ruan Y."/>
            <person name="Salzberg S.L."/>
            <person name="Sandelin A."/>
            <person name="Schneider C."/>
            <person name="Schoenbach C."/>
            <person name="Sekiguchi K."/>
            <person name="Semple C.A."/>
            <person name="Seno S."/>
            <person name="Sessa L."/>
            <person name="Sheng Y."/>
            <person name="Shibata Y."/>
            <person name="Shimada H."/>
            <person name="Shimada K."/>
            <person name="Silva D."/>
            <person name="Sinclair B."/>
            <person name="Sperling S."/>
            <person name="Stupka E."/>
            <person name="Sugiura K."/>
            <person name="Sultana R."/>
            <person name="Takenaka Y."/>
            <person name="Taki K."/>
            <person name="Tammoja K."/>
            <person name="Tan S.L."/>
            <person name="Tang S."/>
            <person name="Taylor M.S."/>
            <person name="Tegner J."/>
            <person name="Teichmann S.A."/>
            <person name="Ueda H.R."/>
            <person name="van Nimwegen E."/>
            <person name="Verardo R."/>
            <person name="Wei C.L."/>
            <person name="Yagi K."/>
            <person name="Yamanishi H."/>
            <person name="Zabarovsky E."/>
            <person name="Zhu S."/>
            <person name="Zimmer A."/>
            <person name="Hide W."/>
            <person name="Bult C."/>
            <person name="Grimmond S.M."/>
            <person name="Teasdale R.D."/>
            <person name="Liu E.T."/>
            <person name="Brusic V."/>
            <person name="Quackenbush J."/>
            <person name="Wahlestedt C."/>
            <person name="Mattick J.S."/>
            <person name="Hume D.A."/>
            <person name="Kai C."/>
            <person name="Sasaki D."/>
            <person name="Tomaru Y."/>
            <person name="Fukuda S."/>
            <person name="Kanamori-Katayama M."/>
            <person name="Suzuki M."/>
            <person name="Aoki J."/>
            <person name="Arakawa T."/>
            <person name="Iida J."/>
            <person name="Imamura K."/>
            <person name="Itoh M."/>
            <person name="Kato T."/>
            <person name="Kawaji H."/>
            <person name="Kawagashira N."/>
            <person name="Kawashima T."/>
            <person name="Kojima M."/>
            <person name="Kondo S."/>
            <person name="Konno H."/>
            <person name="Nakano K."/>
            <person name="Ninomiya N."/>
            <person name="Nishio T."/>
            <person name="Okada M."/>
            <person name="Plessy C."/>
            <person name="Shibata K."/>
            <person name="Shiraki T."/>
            <person name="Suzuki S."/>
            <person name="Tagami M."/>
            <person name="Waki K."/>
            <person name="Watahiki A."/>
            <person name="Okamura-Oho Y."/>
            <person name="Suzuki H."/>
            <person name="Kawai J."/>
            <person name="Hayashizaki Y."/>
        </authorList>
    </citation>
    <scope>NUCLEOTIDE SEQUENCE [LARGE SCALE MRNA] (ISOFORM 1)</scope>
    <source>
        <strain>C57BL/6J</strain>
        <strain>NOD</strain>
        <tissue>Oviduct</tissue>
        <tissue>Spleen</tissue>
    </source>
</reference>
<comment type="function">
    <text>Probable pathogen-recognition receptor. May mediate the endocytosis of pathogens which are subsequently degraded in lysosomal compartments. May recognize in a calcium-dependent manner high mannose N-linked oligosaccharides in a variety of pathogen antigens.</text>
</comment>
<comment type="subcellular location">
    <subcellularLocation>
        <location evidence="7">Membrane</location>
        <topology evidence="7">Single-pass type II membrane protein</topology>
    </subcellularLocation>
</comment>
<comment type="alternative products">
    <event type="alternative splicing"/>
    <isoform>
        <id>Q91ZX1-1</id>
        <name>1</name>
        <sequence type="displayed"/>
    </isoform>
    <isoform>
        <id>Q91ZX1-2</id>
        <name>2</name>
        <name>neck-less</name>
        <sequence type="described" ref="VSP_010067"/>
    </isoform>
</comment>
<comment type="tissue specificity">
    <text evidence="4 5">Predominantly expressed in dendritic cells. Detected at very low levels in lung, spleen, lymph nodes and bone marrow.</text>
</comment>
<comment type="induction">
    <text evidence="5">Down-regulated upon activation of dendritic cells.</text>
</comment>
<comment type="caution">
    <text evidence="7">In mouse, 5 genes homologous to human CD209/DC-SIGN and CD209L/DC-SIGNR have been identified. Mouse CD209A product was named DC-SIGN by PubMed:11581173 because of its similar expression pattern and chromosomal location in juxtaposition to CD23, but despite of the low sequence similarity.</text>
</comment>
<comment type="online information" name="Functional Glycomics Gateway - Glycan Binding">
    <link uri="http://www.functionalglycomics.org/glycomics/GBPServlet?&amp;operationType=view&amp;cbpId=cbp_mou_Ctlect_00130"/>
    <text>SIGNR5</text>
</comment>
<name>C209A_MOUSE</name>
<keyword id="KW-0025">Alternative splicing</keyword>
<keyword id="KW-0106">Calcium</keyword>
<keyword id="KW-1015">Disulfide bond</keyword>
<keyword id="KW-0254">Endocytosis</keyword>
<keyword id="KW-0325">Glycoprotein</keyword>
<keyword id="KW-0430">Lectin</keyword>
<keyword id="KW-0465">Mannose-binding</keyword>
<keyword id="KW-0472">Membrane</keyword>
<keyword id="KW-0479">Metal-binding</keyword>
<keyword id="KW-0675">Receptor</keyword>
<keyword id="KW-1185">Reference proteome</keyword>
<keyword id="KW-0735">Signal-anchor</keyword>
<keyword id="KW-0812">Transmembrane</keyword>
<keyword id="KW-1133">Transmembrane helix</keyword>
<gene>
    <name type="primary">Cd209a</name>
    <name type="synonym">Cire</name>
</gene>